<gene>
    <name evidence="1" type="primary">rpsH</name>
    <name type="ordered locus">SPG_0209</name>
</gene>
<protein>
    <recommendedName>
        <fullName evidence="1">Small ribosomal subunit protein uS8</fullName>
    </recommendedName>
    <alternativeName>
        <fullName evidence="2">30S ribosomal protein S8</fullName>
    </alternativeName>
</protein>
<accession>B5E6G9</accession>
<feature type="chain" id="PRO_1000140619" description="Small ribosomal subunit protein uS8">
    <location>
        <begin position="1"/>
        <end position="132"/>
    </location>
</feature>
<comment type="function">
    <text evidence="1">One of the primary rRNA binding proteins, it binds directly to 16S rRNA central domain where it helps coordinate assembly of the platform of the 30S subunit.</text>
</comment>
<comment type="subunit">
    <text evidence="1">Part of the 30S ribosomal subunit. Contacts proteins S5 and S12.</text>
</comment>
<comment type="similarity">
    <text evidence="1">Belongs to the universal ribosomal protein uS8 family.</text>
</comment>
<evidence type="ECO:0000255" key="1">
    <source>
        <dbReference type="HAMAP-Rule" id="MF_01302"/>
    </source>
</evidence>
<evidence type="ECO:0000305" key="2"/>
<organism>
    <name type="scientific">Streptococcus pneumoniae serotype 19F (strain G54)</name>
    <dbReference type="NCBI Taxonomy" id="512566"/>
    <lineage>
        <taxon>Bacteria</taxon>
        <taxon>Bacillati</taxon>
        <taxon>Bacillota</taxon>
        <taxon>Bacilli</taxon>
        <taxon>Lactobacillales</taxon>
        <taxon>Streptococcaceae</taxon>
        <taxon>Streptococcus</taxon>
    </lineage>
</organism>
<dbReference type="EMBL" id="CP001015">
    <property type="protein sequence ID" value="ACF55305.1"/>
    <property type="molecule type" value="Genomic_DNA"/>
</dbReference>
<dbReference type="SMR" id="B5E6G9"/>
<dbReference type="KEGG" id="spx:SPG_0209"/>
<dbReference type="HOGENOM" id="CLU_098428_0_2_9"/>
<dbReference type="GO" id="GO:1990904">
    <property type="term" value="C:ribonucleoprotein complex"/>
    <property type="evidence" value="ECO:0007669"/>
    <property type="project" value="UniProtKB-KW"/>
</dbReference>
<dbReference type="GO" id="GO:0005840">
    <property type="term" value="C:ribosome"/>
    <property type="evidence" value="ECO:0007669"/>
    <property type="project" value="UniProtKB-KW"/>
</dbReference>
<dbReference type="GO" id="GO:0019843">
    <property type="term" value="F:rRNA binding"/>
    <property type="evidence" value="ECO:0007669"/>
    <property type="project" value="UniProtKB-UniRule"/>
</dbReference>
<dbReference type="GO" id="GO:0003735">
    <property type="term" value="F:structural constituent of ribosome"/>
    <property type="evidence" value="ECO:0007669"/>
    <property type="project" value="InterPro"/>
</dbReference>
<dbReference type="GO" id="GO:0006412">
    <property type="term" value="P:translation"/>
    <property type="evidence" value="ECO:0007669"/>
    <property type="project" value="UniProtKB-UniRule"/>
</dbReference>
<dbReference type="FunFam" id="3.30.1370.30:FF:000002">
    <property type="entry name" value="30S ribosomal protein S8"/>
    <property type="match status" value="1"/>
</dbReference>
<dbReference type="FunFam" id="3.30.1490.10:FF:000001">
    <property type="entry name" value="30S ribosomal protein S8"/>
    <property type="match status" value="1"/>
</dbReference>
<dbReference type="Gene3D" id="3.30.1370.30">
    <property type="match status" value="1"/>
</dbReference>
<dbReference type="Gene3D" id="3.30.1490.10">
    <property type="match status" value="1"/>
</dbReference>
<dbReference type="HAMAP" id="MF_01302_B">
    <property type="entry name" value="Ribosomal_uS8_B"/>
    <property type="match status" value="1"/>
</dbReference>
<dbReference type="InterPro" id="IPR000630">
    <property type="entry name" value="Ribosomal_uS8"/>
</dbReference>
<dbReference type="InterPro" id="IPR047863">
    <property type="entry name" value="Ribosomal_uS8_CS"/>
</dbReference>
<dbReference type="InterPro" id="IPR035987">
    <property type="entry name" value="Ribosomal_uS8_sf"/>
</dbReference>
<dbReference type="NCBIfam" id="NF001109">
    <property type="entry name" value="PRK00136.1"/>
    <property type="match status" value="1"/>
</dbReference>
<dbReference type="PANTHER" id="PTHR11758">
    <property type="entry name" value="40S RIBOSOMAL PROTEIN S15A"/>
    <property type="match status" value="1"/>
</dbReference>
<dbReference type="Pfam" id="PF00410">
    <property type="entry name" value="Ribosomal_S8"/>
    <property type="match status" value="1"/>
</dbReference>
<dbReference type="SUPFAM" id="SSF56047">
    <property type="entry name" value="Ribosomal protein S8"/>
    <property type="match status" value="1"/>
</dbReference>
<dbReference type="PROSITE" id="PS00053">
    <property type="entry name" value="RIBOSOMAL_S8"/>
    <property type="match status" value="1"/>
</dbReference>
<sequence length="132" mass="14744">MVMTDPIADFLTRIRNANQAKHEVLEVPASNIKKGIAEILKREGFVKNVEIIEDDKQGVIRVFLKYGSNGEKVITNLKRVSKPGLRVYKKREDLPKVLNGLGIAILSTSEGLLTDKEARQKNVGGEVIAYVW</sequence>
<proteinExistence type="inferred from homology"/>
<reference key="1">
    <citation type="journal article" date="2001" name="Microb. Drug Resist.">
        <title>Annotated draft genomic sequence from a Streptococcus pneumoniae type 19F clinical isolate.</title>
        <authorList>
            <person name="Dopazo J."/>
            <person name="Mendoza A."/>
            <person name="Herrero J."/>
            <person name="Caldara F."/>
            <person name="Humbert Y."/>
            <person name="Friedli L."/>
            <person name="Guerrier M."/>
            <person name="Grand-Schenk E."/>
            <person name="Gandin C."/>
            <person name="de Francesco M."/>
            <person name="Polissi A."/>
            <person name="Buell G."/>
            <person name="Feger G."/>
            <person name="Garcia E."/>
            <person name="Peitsch M."/>
            <person name="Garcia-Bustos J.F."/>
        </authorList>
    </citation>
    <scope>NUCLEOTIDE SEQUENCE [LARGE SCALE GENOMIC DNA]</scope>
    <source>
        <strain>G54</strain>
    </source>
</reference>
<reference key="2">
    <citation type="submission" date="2008-03" db="EMBL/GenBank/DDBJ databases">
        <title>Pneumococcal beta glucoside metabolism investigated by whole genome comparison.</title>
        <authorList>
            <person name="Mulas L."/>
            <person name="Trappetti C."/>
            <person name="Hakenbeck R."/>
            <person name="Iannelli F."/>
            <person name="Pozzi G."/>
            <person name="Davidsen T.M."/>
            <person name="Tettelin H."/>
            <person name="Oggioni M."/>
        </authorList>
    </citation>
    <scope>NUCLEOTIDE SEQUENCE [LARGE SCALE GENOMIC DNA]</scope>
    <source>
        <strain>G54</strain>
    </source>
</reference>
<name>RS8_STRP4</name>
<keyword id="KW-0687">Ribonucleoprotein</keyword>
<keyword id="KW-0689">Ribosomal protein</keyword>
<keyword id="KW-0694">RNA-binding</keyword>
<keyword id="KW-0699">rRNA-binding</keyword>